<evidence type="ECO:0000250" key="1"/>
<evidence type="ECO:0000255" key="2">
    <source>
        <dbReference type="PROSITE-ProRule" id="PRU00269"/>
    </source>
</evidence>
<evidence type="ECO:0000305" key="3"/>
<protein>
    <recommendedName>
        <fullName>Probable phosphatidylinositol 3-kinase VPS34 homolog</fullName>
        <shortName>PI3-kinase VPS34</shortName>
        <shortName>PI3K VPS34</shortName>
        <shortName>PtdIns-3-kinase VPS34</shortName>
        <ecNumber>2.7.1.137</ecNumber>
    </recommendedName>
</protein>
<feature type="chain" id="PRO_0000388438" description="Probable phosphatidylinositol 3-kinase VPS34 homolog">
    <location>
        <begin position="1"/>
        <end position="446"/>
    </location>
</feature>
<feature type="domain" description="PI3K/PI4K catalytic" evidence="2">
    <location>
        <begin position="177"/>
        <end position="430"/>
    </location>
</feature>
<feature type="region of interest" description="G-loop" evidence="2">
    <location>
        <begin position="183"/>
        <end position="189"/>
    </location>
</feature>
<feature type="region of interest" description="Catalytic loop" evidence="2">
    <location>
        <begin position="302"/>
        <end position="310"/>
    </location>
</feature>
<feature type="region of interest" description="Activation loop" evidence="2">
    <location>
        <begin position="321"/>
        <end position="342"/>
    </location>
</feature>
<proteinExistence type="inferred from homology"/>
<dbReference type="EC" id="2.7.1.137"/>
<dbReference type="EMBL" id="AL590449">
    <property type="protein sequence ID" value="CAD25778.2"/>
    <property type="molecule type" value="Genomic_DNA"/>
</dbReference>
<dbReference type="RefSeq" id="NP_586174.1">
    <property type="nucleotide sequence ID" value="NM_001042007.1"/>
</dbReference>
<dbReference type="SMR" id="Q8SR56"/>
<dbReference type="STRING" id="284813.Q8SR56"/>
<dbReference type="GeneID" id="859823"/>
<dbReference type="KEGG" id="ecu:ECU10_0590"/>
<dbReference type="VEuPathDB" id="MicrosporidiaDB:ECU10_0590"/>
<dbReference type="HOGENOM" id="CLU_618240_0_0_1"/>
<dbReference type="InParanoid" id="Q8SR56"/>
<dbReference type="OrthoDB" id="67688at2759"/>
<dbReference type="Proteomes" id="UP000000819">
    <property type="component" value="Chromosome X"/>
</dbReference>
<dbReference type="GO" id="GO:0010008">
    <property type="term" value="C:endosome membrane"/>
    <property type="evidence" value="ECO:0007669"/>
    <property type="project" value="UniProtKB-SubCell"/>
</dbReference>
<dbReference type="GO" id="GO:0005794">
    <property type="term" value="C:Golgi apparatus"/>
    <property type="evidence" value="ECO:0007669"/>
    <property type="project" value="UniProtKB-SubCell"/>
</dbReference>
<dbReference type="GO" id="GO:0016303">
    <property type="term" value="F:1-phosphatidylinositol-3-kinase activity"/>
    <property type="evidence" value="ECO:0007669"/>
    <property type="project" value="UniProtKB-EC"/>
</dbReference>
<dbReference type="GO" id="GO:0005524">
    <property type="term" value="F:ATP binding"/>
    <property type="evidence" value="ECO:0007669"/>
    <property type="project" value="UniProtKB-KW"/>
</dbReference>
<dbReference type="GO" id="GO:0048015">
    <property type="term" value="P:phosphatidylinositol-mediated signaling"/>
    <property type="evidence" value="ECO:0007669"/>
    <property type="project" value="TreeGrafter"/>
</dbReference>
<dbReference type="GO" id="GO:0015031">
    <property type="term" value="P:protein transport"/>
    <property type="evidence" value="ECO:0007669"/>
    <property type="project" value="UniProtKB-KW"/>
</dbReference>
<dbReference type="Gene3D" id="1.10.1070.11">
    <property type="entry name" value="Phosphatidylinositol 3-/4-kinase, catalytic domain"/>
    <property type="match status" value="1"/>
</dbReference>
<dbReference type="Gene3D" id="3.30.1010.10">
    <property type="entry name" value="Phosphatidylinositol 3-kinase Catalytic Subunit, Chain A, domain 4"/>
    <property type="match status" value="1"/>
</dbReference>
<dbReference type="InterPro" id="IPR011009">
    <property type="entry name" value="Kinase-like_dom_sf"/>
</dbReference>
<dbReference type="InterPro" id="IPR000403">
    <property type="entry name" value="PI3/4_kinase_cat_dom"/>
</dbReference>
<dbReference type="InterPro" id="IPR036940">
    <property type="entry name" value="PI3/4_kinase_cat_sf"/>
</dbReference>
<dbReference type="InterPro" id="IPR015433">
    <property type="entry name" value="PI_Kinase"/>
</dbReference>
<dbReference type="PANTHER" id="PTHR10048">
    <property type="entry name" value="PHOSPHATIDYLINOSITOL KINASE"/>
    <property type="match status" value="1"/>
</dbReference>
<dbReference type="Pfam" id="PF00454">
    <property type="entry name" value="PI3_PI4_kinase"/>
    <property type="match status" value="1"/>
</dbReference>
<dbReference type="SMART" id="SM00146">
    <property type="entry name" value="PI3Kc"/>
    <property type="match status" value="1"/>
</dbReference>
<dbReference type="SUPFAM" id="SSF56112">
    <property type="entry name" value="Protein kinase-like (PK-like)"/>
    <property type="match status" value="1"/>
</dbReference>
<dbReference type="PROSITE" id="PS50290">
    <property type="entry name" value="PI3_4_KINASE_3"/>
    <property type="match status" value="1"/>
</dbReference>
<name>VPS34_ENCCU</name>
<keyword id="KW-0067">ATP-binding</keyword>
<keyword id="KW-0967">Endosome</keyword>
<keyword id="KW-0333">Golgi apparatus</keyword>
<keyword id="KW-0418">Kinase</keyword>
<keyword id="KW-0472">Membrane</keyword>
<keyword id="KW-0547">Nucleotide-binding</keyword>
<keyword id="KW-0653">Protein transport</keyword>
<keyword id="KW-1185">Reference proteome</keyword>
<keyword id="KW-0808">Transferase</keyword>
<keyword id="KW-0813">Transport</keyword>
<reference key="1">
    <citation type="journal article" date="2001" name="Nature">
        <title>Genome sequence and gene compaction of the eukaryote parasite Encephalitozoon cuniculi.</title>
        <authorList>
            <person name="Katinka M.D."/>
            <person name="Duprat S."/>
            <person name="Cornillot E."/>
            <person name="Metenier G."/>
            <person name="Thomarat F."/>
            <person name="Prensier G."/>
            <person name="Barbe V."/>
            <person name="Peyretaillade E."/>
            <person name="Brottier P."/>
            <person name="Wincker P."/>
            <person name="Delbac F."/>
            <person name="El Alaoui H."/>
            <person name="Peyret P."/>
            <person name="Saurin W."/>
            <person name="Gouy M."/>
            <person name="Weissenbach J."/>
            <person name="Vivares C.P."/>
        </authorList>
    </citation>
    <scope>NUCLEOTIDE SEQUENCE [LARGE SCALE GENOMIC DNA]</scope>
    <source>
        <strain>GB-M1</strain>
    </source>
</reference>
<reference key="2">
    <citation type="journal article" date="2009" name="BMC Genomics">
        <title>Identification of transcriptional signals in Encephalitozoon cuniculi widespread among Microsporidia phylum: support for accurate structural genome annotation.</title>
        <authorList>
            <person name="Peyretaillade E."/>
            <person name="Goncalves O."/>
            <person name="Terrat S."/>
            <person name="Dugat-Bony E."/>
            <person name="Wincker P."/>
            <person name="Cornman R.S."/>
            <person name="Evans J.D."/>
            <person name="Delbac F."/>
            <person name="Peyret P."/>
        </authorList>
    </citation>
    <scope>GENOME REANNOTATION</scope>
    <source>
        <strain>GB-M1</strain>
    </source>
</reference>
<accession>Q8SR56</accession>
<gene>
    <name type="primary">VPS34</name>
    <name type="ordered locus">ECU10_0590</name>
</gene>
<organism>
    <name type="scientific">Encephalitozoon cuniculi (strain GB-M1)</name>
    <name type="common">Microsporidian parasite</name>
    <dbReference type="NCBI Taxonomy" id="284813"/>
    <lineage>
        <taxon>Eukaryota</taxon>
        <taxon>Fungi</taxon>
        <taxon>Fungi incertae sedis</taxon>
        <taxon>Microsporidia</taxon>
        <taxon>Unikaryonidae</taxon>
        <taxon>Encephalitozoon</taxon>
    </lineage>
</organism>
<sequence length="446" mass="52007">MEEWDGDVFTWNAGKEDIYTLIESILRLLKNGCKGMENMVVKYLGTGATDSLYMYFPWLRGRDLESRLSVEHQIDRFWKIRFELHEERTNSMDRYEDIVSSFLALDTKCGILGKLEGQMALVDEIRRIYSITSQGSPRKKRLREYRLHGTLCLHPGAGSMRLYASLFSLDATVKEIIFPEIEIFPSSTFPILVPLRTDRGVSRIIYKKGDDLTRDLFVLETIRYMSRLMGVDLVTYKVIPLSRKEGIVEVVDGIDFTRIRSRKDLEMYIEEDRDPRHQESFEKRKVFVSTLCGYSVACYVMGIGDRNPGNMMVTRDGKFFHIDFSHVFGRDPKPISSRITIARPIRDYLVNDELIYQDFLARSGEAFLQIRRSCRKIFVLWCILAQNRIFQFDLNEIIPFAQARLRMEMSEQRALELFEKEIRGAVGSLKTSVAHLINRVGMFLRR</sequence>
<comment type="function">
    <text evidence="1">Phosphatidylinositol 3-kinase required for cytoplasm to vacuole transport (Cvt) and autophagy as a part of the autophagy-specific VPS34 PI3-kinase complex I. Also involved in endosome-to-Golgi retrograde transport as part of the VPS34 PI3-kinase complex II (By similarity).</text>
</comment>
<comment type="catalytic activity">
    <reaction>
        <text>a 1,2-diacyl-sn-glycero-3-phospho-(1D-myo-inositol) + ATP = a 1,2-diacyl-sn-glycero-3-phospho-(1D-myo-inositol-3-phosphate) + ADP + H(+)</text>
        <dbReference type="Rhea" id="RHEA:12709"/>
        <dbReference type="ChEBI" id="CHEBI:15378"/>
        <dbReference type="ChEBI" id="CHEBI:30616"/>
        <dbReference type="ChEBI" id="CHEBI:57880"/>
        <dbReference type="ChEBI" id="CHEBI:58088"/>
        <dbReference type="ChEBI" id="CHEBI:456216"/>
        <dbReference type="EC" id="2.7.1.137"/>
    </reaction>
</comment>
<comment type="subunit">
    <text evidence="1">Component of the autophagy-specific VPS34 PI3-kinase complex I composed; and of the VPS34 PI3-kinase complex II.</text>
</comment>
<comment type="subcellular location">
    <subcellularLocation>
        <location evidence="1">Golgi apparatus</location>
        <location evidence="1">trans-Golgi network membrane</location>
        <topology evidence="1">Peripheral membrane protein</topology>
    </subcellularLocation>
    <subcellularLocation>
        <location evidence="1">Endosome membrane</location>
        <topology evidence="1">Peripheral membrane protein</topology>
    </subcellularLocation>
</comment>
<comment type="similarity">
    <text evidence="3">Belongs to the PI3/PI4-kinase family.</text>
</comment>